<comment type="function">
    <text evidence="1">Adhesion G-protein coupled receptor (aGPCR) for androgen hormone 5alpha-dihydrotestosterone (5alpha-DHT), also named 17beta-hydroxy-5alpha-androstan-3-one, the most potent hormone among androgens. Also activated by methenolone drug. Ligand binding causes a conformation change that triggers signaling via guanine nucleotide-binding proteins (G proteins) and modulates the activity of downstream effectors, such as adenylate cyclase. ADGRD1 is coupled to G(s) G proteins and mediates activation of adenylate cyclase activity. Acts as a 5alpha-DHT receptor in muscle cells, thereby increasing intracellular cyclic AMP (cAMP) levels and enhancing muscle strength.</text>
</comment>
<comment type="activity regulation">
    <text evidence="1">Forms a heterodimer of 2 chains generated by proteolytic processing that remain associated through non-covalent interactions mediated by the GAIN-B domain. In the inactivated receptor, the Stachel sequence (also named stalk) is embedded in the GAIN-B domain, where it adopts a beta-strand conformation. On activation, the Stachel moves into the 7 transmembrane region and adopts a twisted hook-shaped configuration that forms contacts within the receptor, leading to coupling of a G-alpha protein, which activates signaling. The cleaved GAIN-B and N-terminal domains can then dissociate from the rest of the receptor. Interaction with ESYT1 in absence of cytosolic calcium inhibits the G protein-coupled receptor activity; interaction and inhibition is relieved when cytosolic calcium increases.</text>
</comment>
<comment type="subunit">
    <text evidence="1 3">Heterodimer of 2 chains generated by proteolytic processing; the large extracellular N-terminal fragment and the membrane-bound C-terminal fragment predominantly remain associated and non-covalently linked (By similarity). Interacts with ESYT1; interaction takes place in absence of cytosolic calcium and inhibits the G protein-coupled receptor activity of ADGRD1 (By similarity).</text>
</comment>
<comment type="subcellular location">
    <subcellularLocation>
        <location evidence="1">Cell membrane</location>
        <topology evidence="1">Multi-pass membrane protein</topology>
    </subcellularLocation>
</comment>
<comment type="alternative products">
    <event type="alternative splicing"/>
    <isoform>
        <id>A6QLU6-1</id>
        <name>1</name>
        <sequence type="displayed"/>
    </isoform>
    <isoform>
        <id>A6QLU6-2</id>
        <name>2</name>
        <sequence type="described" ref="VSP_028570 VSP_028571 VSP_028572"/>
    </isoform>
</comment>
<comment type="domain">
    <text evidence="1">The Stachel sequence (also named stalk) in the C-terminal part of the extracellular domain (ECD) functions as a tethered agonist. In the inactivated receptor, the Stachel sequence (also named stalk) is embedded in the GAIN-B domain, where it adopts a beta-strand conformation. On activation, the Stachel moves into the 7 transmembrane region and adopts a twisted hook-shaped configuration that forms contacts within the receptor, leading to coupling of a G-alpha protein, which activates signaling.</text>
</comment>
<comment type="domain">
    <text evidence="1">The N-terminal domain and autocatalytic activity of ADGRD1 at the GPCR proteolysis site (GPS) are not required for G-protein coupling activity.</text>
</comment>
<comment type="PTM">
    <text evidence="1 3">Autoproteolytically processed at the GPS region of the GAIN-B domain; this cleavage modulates receptor activity (By similarity). Cleavage takes place early in the secretory pathway before N-glycosylation (By similarity).</text>
</comment>
<comment type="miscellaneous">
    <text evidence="1">The N-terminal domain and autocatalytic activity of ADGRD1 at the GPCR proteolysis site (GPS) are not required for G-protein coupling activity.</text>
</comment>
<comment type="similarity">
    <text evidence="7">Belongs to the G-protein coupled receptor 2 family. Adhesion G-protein coupled receptor (ADGR) subfamily.</text>
</comment>
<protein>
    <recommendedName>
        <fullName>Adhesion G-protein coupled receptor D1</fullName>
    </recommendedName>
    <alternativeName>
        <fullName>G-protein coupled receptor 133</fullName>
    </alternativeName>
    <component>
        <recommendedName>
            <fullName evidence="7">Adhesion G-protein coupled receptor D1, N-terminal fragment</fullName>
            <shortName evidence="7">ADGRD1 N-terminal fragment</shortName>
        </recommendedName>
    </component>
    <component>
        <recommendedName>
            <fullName evidence="7">Adhesion G-protein coupled receptor D1, C-terminal fragment</fullName>
            <shortName evidence="7">ADGRD1 C-terminal fragment</shortName>
        </recommendedName>
    </component>
</protein>
<feature type="signal peptide" evidence="2">
    <location>
        <begin position="1"/>
        <end position="25"/>
    </location>
</feature>
<feature type="chain" id="PRO_0000307112" description="Adhesion G-protein coupled receptor D1">
    <location>
        <begin position="26"/>
        <end position="902"/>
    </location>
</feature>
<feature type="chain" id="PRO_0000462395" description="Adhesion G-protein coupled receptor D1, N-terminal fragment" evidence="7">
    <location>
        <begin position="26"/>
        <end position="572"/>
    </location>
</feature>
<feature type="chain" id="PRO_0000462396" description="Adhesion G-protein coupled receptor D1, C-terminal fragment" evidence="7">
    <location>
        <begin position="573"/>
        <end position="902"/>
    </location>
</feature>
<feature type="topological domain" description="Extracellular" evidence="7">
    <location>
        <begin position="26"/>
        <end position="598"/>
    </location>
</feature>
<feature type="transmembrane region" description="Helical; Name=1" evidence="2">
    <location>
        <begin position="599"/>
        <end position="619"/>
    </location>
</feature>
<feature type="topological domain" description="Cytoplasmic" evidence="7">
    <location>
        <begin position="620"/>
        <end position="630"/>
    </location>
</feature>
<feature type="transmembrane region" description="Helical; Name=2" evidence="2">
    <location>
        <begin position="631"/>
        <end position="651"/>
    </location>
</feature>
<feature type="topological domain" description="Extracellular" evidence="7">
    <location>
        <begin position="652"/>
        <end position="661"/>
    </location>
</feature>
<feature type="transmembrane region" description="Helical; Name=3" evidence="2">
    <location>
        <begin position="662"/>
        <end position="682"/>
    </location>
</feature>
<feature type="topological domain" description="Cytoplasmic" evidence="7">
    <location>
        <begin position="683"/>
        <end position="702"/>
    </location>
</feature>
<feature type="transmembrane region" description="Helical; Name=4" evidence="2">
    <location>
        <begin position="703"/>
        <end position="723"/>
    </location>
</feature>
<feature type="topological domain" description="Extracellular" evidence="7">
    <location>
        <begin position="724"/>
        <end position="739"/>
    </location>
</feature>
<feature type="transmembrane region" description="Helical; Name=5" evidence="2">
    <location>
        <begin position="740"/>
        <end position="760"/>
    </location>
</feature>
<feature type="topological domain" description="Cytoplasmic" evidence="7">
    <location>
        <begin position="761"/>
        <end position="788"/>
    </location>
</feature>
<feature type="transmembrane region" description="Helical; Name=6" evidence="2">
    <location>
        <begin position="789"/>
        <end position="809"/>
    </location>
</feature>
<feature type="topological domain" description="Extracellular" evidence="7">
    <location>
        <begin position="810"/>
        <end position="812"/>
    </location>
</feature>
<feature type="transmembrane region" description="Helical; Name=7" evidence="2">
    <location>
        <begin position="813"/>
        <end position="833"/>
    </location>
</feature>
<feature type="topological domain" description="Cytoplasmic" evidence="7">
    <location>
        <begin position="834"/>
        <end position="902"/>
    </location>
</feature>
<feature type="domain" description="Pentraxin (PTX)" evidence="4">
    <location>
        <begin position="111"/>
        <end position="304"/>
    </location>
</feature>
<feature type="domain" description="GAIN-B" evidence="3">
    <location>
        <begin position="399"/>
        <end position="585"/>
    </location>
</feature>
<feature type="region of interest" description="GPS" evidence="3">
    <location>
        <begin position="538"/>
        <end position="585"/>
    </location>
</feature>
<feature type="region of interest" description="Stachel" evidence="1">
    <location>
        <begin position="574"/>
        <end position="582"/>
    </location>
</feature>
<feature type="region of interest" description="Disordered" evidence="5">
    <location>
        <begin position="865"/>
        <end position="902"/>
    </location>
</feature>
<feature type="compositionally biased region" description="Polar residues" evidence="5">
    <location>
        <begin position="870"/>
        <end position="884"/>
    </location>
</feature>
<feature type="compositionally biased region" description="Basic and acidic residues" evidence="5">
    <location>
        <begin position="889"/>
        <end position="902"/>
    </location>
</feature>
<feature type="binding site" evidence="1">
    <location>
        <position position="591"/>
    </location>
    <ligand>
        <name>17beta-hydroxy-5alpha-androstan-3-one</name>
        <dbReference type="ChEBI" id="CHEBI:16330"/>
    </ligand>
</feature>
<feature type="site" description="Cleavage; by autolysis" evidence="3">
    <location>
        <begin position="572"/>
        <end position="573"/>
    </location>
</feature>
<feature type="glycosylation site" description="N-linked (GlcNAc...) asparagine" evidence="2">
    <location>
        <position position="68"/>
    </location>
</feature>
<feature type="glycosylation site" description="N-linked (GlcNAc...) asparagine" evidence="2">
    <location>
        <position position="76"/>
    </location>
</feature>
<feature type="glycosylation site" description="N-linked (GlcNAc...) asparagine" evidence="2">
    <location>
        <position position="83"/>
    </location>
</feature>
<feature type="glycosylation site" description="N-linked (GlcNAc...) asparagine" evidence="2">
    <location>
        <position position="89"/>
    </location>
</feature>
<feature type="glycosylation site" description="N-linked (GlcNAc...) asparagine" evidence="2">
    <location>
        <position position="121"/>
    </location>
</feature>
<feature type="glycosylation site" description="N-linked (GlcNAc...) asparagine" evidence="2">
    <location>
        <position position="183"/>
    </location>
</feature>
<feature type="glycosylation site" description="N-linked (GlcNAc...) asparagine" evidence="2">
    <location>
        <position position="217"/>
    </location>
</feature>
<feature type="glycosylation site" description="N-linked (GlcNAc...) asparagine" evidence="2">
    <location>
        <position position="310"/>
    </location>
</feature>
<feature type="glycosylation site" description="N-linked (GlcNAc...) asparagine" evidence="2">
    <location>
        <position position="330"/>
    </location>
</feature>
<feature type="glycosylation site" description="N-linked (GlcNAc...) asparagine" evidence="2">
    <location>
        <position position="337"/>
    </location>
</feature>
<feature type="glycosylation site" description="N-linked (GlcNAc...) asparagine" evidence="2">
    <location>
        <position position="347"/>
    </location>
</feature>
<feature type="glycosylation site" description="N-linked (GlcNAc...) asparagine" evidence="2">
    <location>
        <position position="422"/>
    </location>
</feature>
<feature type="glycosylation site" description="N-linked (GlcNAc...) asparagine" evidence="2">
    <location>
        <position position="504"/>
    </location>
</feature>
<feature type="glycosylation site" description="N-linked (GlcNAc...) asparagine" evidence="2">
    <location>
        <position position="529"/>
    </location>
</feature>
<feature type="glycosylation site" description="N-linked (GlcNAc...) asparagine" evidence="2">
    <location>
        <position position="561"/>
    </location>
</feature>
<feature type="disulfide bond" evidence="3">
    <location>
        <begin position="538"/>
        <end position="567"/>
    </location>
</feature>
<feature type="disulfide bond" evidence="3">
    <location>
        <begin position="555"/>
        <end position="569"/>
    </location>
</feature>
<feature type="disulfide bond" evidence="1">
    <location>
        <begin position="660"/>
        <end position="732"/>
    </location>
</feature>
<feature type="splice variant" id="VSP_028570" description="In isoform 2." evidence="6">
    <location>
        <begin position="63"/>
        <end position="94"/>
    </location>
</feature>
<feature type="splice variant" id="VSP_028571" description="In isoform 2." evidence="6">
    <original>TQ</original>
    <variation>VS</variation>
    <location>
        <begin position="520"/>
        <end position="521"/>
    </location>
</feature>
<feature type="splice variant" id="VSP_028572" description="In isoform 2." evidence="6">
    <location>
        <begin position="522"/>
        <end position="902"/>
    </location>
</feature>
<evidence type="ECO:0000250" key="1">
    <source>
        <dbReference type="UniProtKB" id="Q6QNK2"/>
    </source>
</evidence>
<evidence type="ECO:0000255" key="2"/>
<evidence type="ECO:0000255" key="3">
    <source>
        <dbReference type="PROSITE-ProRule" id="PRU00098"/>
    </source>
</evidence>
<evidence type="ECO:0000255" key="4">
    <source>
        <dbReference type="PROSITE-ProRule" id="PRU01172"/>
    </source>
</evidence>
<evidence type="ECO:0000256" key="5">
    <source>
        <dbReference type="SAM" id="MobiDB-lite"/>
    </source>
</evidence>
<evidence type="ECO:0000303" key="6">
    <source>
    </source>
</evidence>
<evidence type="ECO:0000305" key="7"/>
<dbReference type="EMBL" id="BT021602">
    <property type="protein sequence ID" value="AAX46449.1"/>
    <property type="molecule type" value="mRNA"/>
</dbReference>
<dbReference type="EMBL" id="BC148090">
    <property type="protein sequence ID" value="AAI48091.1"/>
    <property type="molecule type" value="mRNA"/>
</dbReference>
<dbReference type="RefSeq" id="NP_001029736.2">
    <molecule id="A6QLU6-1"/>
    <property type="nucleotide sequence ID" value="NM_001034564.2"/>
</dbReference>
<dbReference type="SMR" id="A6QLU6"/>
<dbReference type="FunCoup" id="A6QLU6">
    <property type="interactions" value="82"/>
</dbReference>
<dbReference type="STRING" id="9913.ENSBTAP00000027783"/>
<dbReference type="GlyCosmos" id="A6QLU6">
    <property type="glycosylation" value="15 sites, No reported glycans"/>
</dbReference>
<dbReference type="GlyGen" id="A6QLU6">
    <property type="glycosylation" value="15 sites"/>
</dbReference>
<dbReference type="PaxDb" id="9913-ENSBTAP00000027783"/>
<dbReference type="GeneID" id="528174"/>
<dbReference type="KEGG" id="bta:528174"/>
<dbReference type="CTD" id="283383"/>
<dbReference type="eggNOG" id="KOG4193">
    <property type="taxonomic scope" value="Eukaryota"/>
</dbReference>
<dbReference type="HOGENOM" id="CLU_008509_0_0_1"/>
<dbReference type="InParanoid" id="A6QLU6"/>
<dbReference type="OrthoDB" id="347083at2759"/>
<dbReference type="TreeFam" id="TF351999"/>
<dbReference type="Proteomes" id="UP000009136">
    <property type="component" value="Unplaced"/>
</dbReference>
<dbReference type="GO" id="GO:0005886">
    <property type="term" value="C:plasma membrane"/>
    <property type="evidence" value="ECO:0000250"/>
    <property type="project" value="UniProtKB"/>
</dbReference>
<dbReference type="GO" id="GO:0004930">
    <property type="term" value="F:G protein-coupled receptor activity"/>
    <property type="evidence" value="ECO:0000250"/>
    <property type="project" value="UniProtKB"/>
</dbReference>
<dbReference type="GO" id="GO:0007189">
    <property type="term" value="P:adenylate cyclase-activating G protein-coupled receptor signaling pathway"/>
    <property type="evidence" value="ECO:0000250"/>
    <property type="project" value="UniProtKB"/>
</dbReference>
<dbReference type="GO" id="GO:0007166">
    <property type="term" value="P:cell surface receptor signaling pathway"/>
    <property type="evidence" value="ECO:0007669"/>
    <property type="project" value="InterPro"/>
</dbReference>
<dbReference type="GO" id="GO:0007186">
    <property type="term" value="P:G protein-coupled receptor signaling pathway"/>
    <property type="evidence" value="ECO:0000250"/>
    <property type="project" value="UniProtKB"/>
</dbReference>
<dbReference type="FunFam" id="2.60.120.200:FF:000368">
    <property type="entry name" value="Adhesion G protein-coupled receptor D1"/>
    <property type="match status" value="1"/>
</dbReference>
<dbReference type="FunFam" id="1.20.1070.10:FF:000073">
    <property type="entry name" value="Adhesion G-protein coupled receptor D1"/>
    <property type="match status" value="1"/>
</dbReference>
<dbReference type="FunFam" id="2.60.220.50:FF:000008">
    <property type="entry name" value="Adhesion G-protein coupled receptor D1"/>
    <property type="match status" value="1"/>
</dbReference>
<dbReference type="Gene3D" id="2.60.120.200">
    <property type="match status" value="1"/>
</dbReference>
<dbReference type="Gene3D" id="2.60.220.50">
    <property type="match status" value="1"/>
</dbReference>
<dbReference type="Gene3D" id="1.20.1070.10">
    <property type="entry name" value="Rhodopsin 7-helix transmembrane proteins"/>
    <property type="match status" value="1"/>
</dbReference>
<dbReference type="InterPro" id="IPR013320">
    <property type="entry name" value="ConA-like_dom_sf"/>
</dbReference>
<dbReference type="InterPro" id="IPR057244">
    <property type="entry name" value="GAIN_B"/>
</dbReference>
<dbReference type="InterPro" id="IPR046338">
    <property type="entry name" value="GAIN_dom_sf"/>
</dbReference>
<dbReference type="InterPro" id="IPR017981">
    <property type="entry name" value="GPCR_2-like_7TM"/>
</dbReference>
<dbReference type="InterPro" id="IPR000832">
    <property type="entry name" value="GPCR_2_secretin-like"/>
</dbReference>
<dbReference type="InterPro" id="IPR017983">
    <property type="entry name" value="GPCR_2_secretin-like_CS"/>
</dbReference>
<dbReference type="InterPro" id="IPR000203">
    <property type="entry name" value="GPS"/>
</dbReference>
<dbReference type="InterPro" id="IPR001759">
    <property type="entry name" value="Pentraxin-related"/>
</dbReference>
<dbReference type="PANTHER" id="PTHR12011">
    <property type="entry name" value="ADHESION G-PROTEIN COUPLED RECEPTOR"/>
    <property type="match status" value="1"/>
</dbReference>
<dbReference type="PANTHER" id="PTHR12011:SF216">
    <property type="entry name" value="ADHESION G-PROTEIN COUPLED RECEPTOR D1"/>
    <property type="match status" value="1"/>
</dbReference>
<dbReference type="Pfam" id="PF00002">
    <property type="entry name" value="7tm_2"/>
    <property type="match status" value="1"/>
</dbReference>
<dbReference type="Pfam" id="PF01825">
    <property type="entry name" value="GPS"/>
    <property type="match status" value="1"/>
</dbReference>
<dbReference type="Pfam" id="PF13385">
    <property type="entry name" value="Laminin_G_3"/>
    <property type="match status" value="1"/>
</dbReference>
<dbReference type="PRINTS" id="PR00249">
    <property type="entry name" value="GPCRSECRETIN"/>
</dbReference>
<dbReference type="SMART" id="SM00303">
    <property type="entry name" value="GPS"/>
    <property type="match status" value="1"/>
</dbReference>
<dbReference type="SUPFAM" id="SSF49899">
    <property type="entry name" value="Concanavalin A-like lectins/glucanases"/>
    <property type="match status" value="1"/>
</dbReference>
<dbReference type="SUPFAM" id="SSF81321">
    <property type="entry name" value="Family A G protein-coupled receptor-like"/>
    <property type="match status" value="1"/>
</dbReference>
<dbReference type="PROSITE" id="PS00650">
    <property type="entry name" value="G_PROTEIN_RECEP_F2_2"/>
    <property type="match status" value="1"/>
</dbReference>
<dbReference type="PROSITE" id="PS50261">
    <property type="entry name" value="G_PROTEIN_RECEP_F2_4"/>
    <property type="match status" value="1"/>
</dbReference>
<dbReference type="PROSITE" id="PS50221">
    <property type="entry name" value="GAIN_B"/>
    <property type="match status" value="1"/>
</dbReference>
<dbReference type="PROSITE" id="PS51828">
    <property type="entry name" value="PTX_2"/>
    <property type="match status" value="1"/>
</dbReference>
<keyword id="KW-0025">Alternative splicing</keyword>
<keyword id="KW-1003">Cell membrane</keyword>
<keyword id="KW-1015">Disulfide bond</keyword>
<keyword id="KW-0325">Glycoprotein</keyword>
<keyword id="KW-0472">Membrane</keyword>
<keyword id="KW-1185">Reference proteome</keyword>
<keyword id="KW-0732">Signal</keyword>
<keyword id="KW-0812">Transmembrane</keyword>
<keyword id="KW-1133">Transmembrane helix</keyword>
<accession>A6QLU6</accession>
<accession>Q58DJ5</accession>
<sequence length="902" mass="99812">MKKLLPLCCWHSWLLLFYCDFQVRGAHTRSHVHPGFEVLASASHYWPLENVDGIHELQETTGASRTHNLTVLPSHNSTFVYTNDSAYSNFSATVDIVEGKVNKGIYLKEGKGVTFLYYRKNKTSCISNPAQCGPEGVSFSFFWKTQGEQSTSIPSAYGGQVISNGFKVCSRGGKGSVELYTHNKSVTWEASFSPPGHYWTHVLFTWKSEEGLKVYVNGTLRTSDPSGKASPAYGESNDNLVLDLTKSYENRAFDEFIIWERALTPDEIAMYFTAAIGEQLSLSSTPPSFSVTPTVNTMAPTNAYHPIITNLTEERKNFRRPGVVLSYLQNMSLSLPNKSLSEETAFNLTKTFLNTVGEVLRLPSWTAVSEDSAVVPGLIDTIDTVMSHITYNLQASKPQVAIVGSSSMADFSVAKVLPKTMNSSHYRFPARGQNYIEIPHEAFHSQAWTTIVGLLYHSVHYYLSNIQPASTKIAEAANYKNCLLSATSYLISLEVSPTPKLSQNLSGSPLITVHLRHHLTQRQYTEATNESNRIFLYCAFLDFSSGEGIWSNQGCALTEGNLSYSICRCTHLTNFAILMQVVPLELTRGHQVALSSISYIGCSLSVLCLAITLVTFAVLSSVSTIRNQRYHIHANLSCAVLVAQVLLLISFRFEPGTAPCQVLAMLLHYFFLSAFAWMLVEGLHLYSMVIKVFGSEDSKHRYYYGIGWGFPLLICIISIVFAMDSYGTSKNCWLSLGNGAIWAFVAPALFIIVVNIGILIAVTRVISQISAENYKIHGDPSAFKLTAKAVAVLLPILGTSWVFGVLAVNNQAMVFQYMFAILNSLQGFFIFLFHCLLNSEVRAAFKHKTKVWSLTSSSSRQANVKPFSSDIMNGTRPATGSTRLSPWDKSSHSGHRVDLSAV</sequence>
<reference key="1">
    <citation type="journal article" date="2005" name="BMC Genomics">
        <title>Characterization of 954 bovine full-CDS cDNA sequences.</title>
        <authorList>
            <person name="Harhay G.P."/>
            <person name="Sonstegard T.S."/>
            <person name="Keele J.W."/>
            <person name="Heaton M.P."/>
            <person name="Clawson M.L."/>
            <person name="Snelling W.M."/>
            <person name="Wiedmann R.T."/>
            <person name="Van Tassell C.P."/>
            <person name="Smith T.P.L."/>
        </authorList>
    </citation>
    <scope>NUCLEOTIDE SEQUENCE [LARGE SCALE MRNA] (ISOFORM 2)</scope>
</reference>
<reference key="2">
    <citation type="submission" date="2007-06" db="EMBL/GenBank/DDBJ databases">
        <authorList>
            <consortium name="NIH - Mammalian Gene Collection (MGC) project"/>
        </authorList>
    </citation>
    <scope>NUCLEOTIDE SEQUENCE [LARGE SCALE MRNA] (ISOFORM 1)</scope>
    <source>
        <strain>Hereford</strain>
        <tissue>Uterus</tissue>
    </source>
</reference>
<organism>
    <name type="scientific">Bos taurus</name>
    <name type="common">Bovine</name>
    <dbReference type="NCBI Taxonomy" id="9913"/>
    <lineage>
        <taxon>Eukaryota</taxon>
        <taxon>Metazoa</taxon>
        <taxon>Chordata</taxon>
        <taxon>Craniata</taxon>
        <taxon>Vertebrata</taxon>
        <taxon>Euteleostomi</taxon>
        <taxon>Mammalia</taxon>
        <taxon>Eutheria</taxon>
        <taxon>Laurasiatheria</taxon>
        <taxon>Artiodactyla</taxon>
        <taxon>Ruminantia</taxon>
        <taxon>Pecora</taxon>
        <taxon>Bovidae</taxon>
        <taxon>Bovinae</taxon>
        <taxon>Bos</taxon>
    </lineage>
</organism>
<proteinExistence type="evidence at transcript level"/>
<gene>
    <name type="primary">ADGRD1</name>
    <name type="synonym">GPR133</name>
</gene>
<name>AGRD1_BOVIN</name>